<dbReference type="EMBL" id="AL163816">
    <property type="protein sequence ID" value="CAB87757.1"/>
    <property type="molecule type" value="Genomic_DNA"/>
</dbReference>
<dbReference type="EMBL" id="CP002686">
    <property type="protein sequence ID" value="AEE80437.1"/>
    <property type="molecule type" value="Genomic_DNA"/>
</dbReference>
<dbReference type="EMBL" id="CP002686">
    <property type="protein sequence ID" value="ANM64214.1"/>
    <property type="molecule type" value="Genomic_DNA"/>
</dbReference>
<dbReference type="EMBL" id="AK176751">
    <property type="protein sequence ID" value="BAD44514.1"/>
    <property type="molecule type" value="mRNA"/>
</dbReference>
<dbReference type="EMBL" id="AK222234">
    <property type="protein sequence ID" value="BAD95416.1"/>
    <property type="molecule type" value="mRNA"/>
</dbReference>
<dbReference type="EMBL" id="AK230449">
    <property type="protein sequence ID" value="BAF02245.1"/>
    <property type="molecule type" value="mRNA"/>
</dbReference>
<dbReference type="EMBL" id="AY087409">
    <property type="protein sequence ID" value="AAM64958.1"/>
    <property type="molecule type" value="mRNA"/>
</dbReference>
<dbReference type="PIR" id="T48101">
    <property type="entry name" value="T48101"/>
</dbReference>
<dbReference type="SMR" id="Q8LB60"/>
<dbReference type="BioGRID" id="10801">
    <property type="interactions" value="2"/>
</dbReference>
<dbReference type="FunCoup" id="Q8LB60">
    <property type="interactions" value="485"/>
</dbReference>
<dbReference type="IntAct" id="Q8LB60">
    <property type="interactions" value="2"/>
</dbReference>
<dbReference type="STRING" id="3702.Q8LB60"/>
<dbReference type="PaxDb" id="3702-AT3G63120.1"/>
<dbReference type="DNASU" id="825487"/>
<dbReference type="EnsemblPlants" id="AT3G63120.1">
    <property type="protein sequence ID" value="AT3G63120.1"/>
    <property type="gene ID" value="AT3G63120"/>
</dbReference>
<dbReference type="EnsemblPlants" id="AT3G63120.2">
    <property type="protein sequence ID" value="AT3G63120.2"/>
    <property type="gene ID" value="AT3G63120"/>
</dbReference>
<dbReference type="Gramene" id="AT3G63120.1">
    <property type="protein sequence ID" value="AT3G63120.1"/>
    <property type="gene ID" value="AT3G63120"/>
</dbReference>
<dbReference type="Gramene" id="AT3G63120.2">
    <property type="protein sequence ID" value="AT3G63120.2"/>
    <property type="gene ID" value="AT3G63120"/>
</dbReference>
<dbReference type="KEGG" id="ath:AT3G63120"/>
<dbReference type="Araport" id="AT3G63120"/>
<dbReference type="TAIR" id="AT3G63120">
    <property type="gene designation" value="CYCP1"/>
</dbReference>
<dbReference type="eggNOG" id="KOG1674">
    <property type="taxonomic scope" value="Eukaryota"/>
</dbReference>
<dbReference type="HOGENOM" id="CLU_057371_0_0_1"/>
<dbReference type="InParanoid" id="Q8LB60"/>
<dbReference type="OMA" id="AHIYIDH"/>
<dbReference type="PhylomeDB" id="Q8LB60"/>
<dbReference type="PRO" id="PR:Q8LB60"/>
<dbReference type="Proteomes" id="UP000006548">
    <property type="component" value="Chromosome 3"/>
</dbReference>
<dbReference type="ExpressionAtlas" id="Q8LB60">
    <property type="expression patterns" value="baseline and differential"/>
</dbReference>
<dbReference type="GO" id="GO:0019901">
    <property type="term" value="F:protein kinase binding"/>
    <property type="evidence" value="ECO:0007669"/>
    <property type="project" value="InterPro"/>
</dbReference>
<dbReference type="GO" id="GO:0051301">
    <property type="term" value="P:cell division"/>
    <property type="evidence" value="ECO:0007669"/>
    <property type="project" value="UniProtKB-KW"/>
</dbReference>
<dbReference type="CDD" id="cd20604">
    <property type="entry name" value="CYCLIN_AtCycU-like"/>
    <property type="match status" value="1"/>
</dbReference>
<dbReference type="Gene3D" id="1.10.472.10">
    <property type="entry name" value="Cyclin-like"/>
    <property type="match status" value="1"/>
</dbReference>
<dbReference type="InterPro" id="IPR036915">
    <property type="entry name" value="Cyclin-like_sf"/>
</dbReference>
<dbReference type="InterPro" id="IPR012389">
    <property type="entry name" value="Cyclin_P/U"/>
</dbReference>
<dbReference type="InterPro" id="IPR013922">
    <property type="entry name" value="Cyclin_PHO80-like"/>
</dbReference>
<dbReference type="PANTHER" id="PTHR15615">
    <property type="match status" value="1"/>
</dbReference>
<dbReference type="PANTHER" id="PTHR15615:SF108">
    <property type="entry name" value="PROTEIN CNPPD1"/>
    <property type="match status" value="1"/>
</dbReference>
<dbReference type="Pfam" id="PF08613">
    <property type="entry name" value="Cyclin"/>
    <property type="match status" value="1"/>
</dbReference>
<dbReference type="PIRSF" id="PIRSF027110">
    <property type="entry name" value="PREG"/>
    <property type="match status" value="1"/>
</dbReference>
<dbReference type="SUPFAM" id="SSF47954">
    <property type="entry name" value="Cyclin-like"/>
    <property type="match status" value="1"/>
</dbReference>
<evidence type="ECO:0000269" key="1">
    <source>
    </source>
</evidence>
<evidence type="ECO:0000305" key="2"/>
<name>CCU31_ARATH</name>
<organism>
    <name type="scientific">Arabidopsis thaliana</name>
    <name type="common">Mouse-ear cress</name>
    <dbReference type="NCBI Taxonomy" id="3702"/>
    <lineage>
        <taxon>Eukaryota</taxon>
        <taxon>Viridiplantae</taxon>
        <taxon>Streptophyta</taxon>
        <taxon>Embryophyta</taxon>
        <taxon>Tracheophyta</taxon>
        <taxon>Spermatophyta</taxon>
        <taxon>Magnoliopsida</taxon>
        <taxon>eudicotyledons</taxon>
        <taxon>Gunneridae</taxon>
        <taxon>Pentapetalae</taxon>
        <taxon>rosids</taxon>
        <taxon>malvids</taxon>
        <taxon>Brassicales</taxon>
        <taxon>Brassicaceae</taxon>
        <taxon>Camelineae</taxon>
        <taxon>Arabidopsis</taxon>
    </lineage>
</organism>
<accession>Q8LB60</accession>
<accession>Q9LYB0</accession>
<gene>
    <name type="primary">CYCU3-1</name>
    <name type="ordered locus">At3g63120</name>
    <name type="ORF">T20O10.220</name>
</gene>
<feature type="chain" id="PRO_0000287071" description="Cyclin-U3-1">
    <location>
        <begin position="1"/>
        <end position="221"/>
    </location>
</feature>
<feature type="sequence conflict" description="In Ref. 4; AAM64958." evidence="2" ref="4">
    <original>R</original>
    <variation>S</variation>
    <location>
        <position position="186"/>
    </location>
</feature>
<sequence>MDSLATDPAFIDSDVYLRLGLIIEGKRLKKPPTVLSRLSSSLERSLLLNHDDKILLGSPDSVTVFDGRSPPEISIAHYLDRIFKYSCCSPSCFVIAHIYIDHFLHKTRALLKPLNVHRLIITTVMLAAKVFDDRYFNNAYYARVGGVTTRELNRLEMELLFTLDFKLQVDPQTFHTHCCQLEKQNRDGFQIEWPIKEACRANKETWQKRTPDSLCSQTTAR</sequence>
<comment type="subunit">
    <text evidence="1">Interacts with CDKA-1 and CDKB1-1.</text>
</comment>
<comment type="tissue specificity">
    <text evidence="1">Expressed in roots, stems and flowers. Expressed in the shoot apex, leaf primordia and young leaves.</text>
</comment>
<comment type="similarity">
    <text evidence="2">Belongs to the cyclin family. Cyclin U/P subfamily.</text>
</comment>
<reference key="1">
    <citation type="journal article" date="2000" name="Nature">
        <title>Sequence and analysis of chromosome 3 of the plant Arabidopsis thaliana.</title>
        <authorList>
            <person name="Salanoubat M."/>
            <person name="Lemcke K."/>
            <person name="Rieger M."/>
            <person name="Ansorge W."/>
            <person name="Unseld M."/>
            <person name="Fartmann B."/>
            <person name="Valle G."/>
            <person name="Bloecker H."/>
            <person name="Perez-Alonso M."/>
            <person name="Obermaier B."/>
            <person name="Delseny M."/>
            <person name="Boutry M."/>
            <person name="Grivell L.A."/>
            <person name="Mache R."/>
            <person name="Puigdomenech P."/>
            <person name="De Simone V."/>
            <person name="Choisne N."/>
            <person name="Artiguenave F."/>
            <person name="Robert C."/>
            <person name="Brottier P."/>
            <person name="Wincker P."/>
            <person name="Cattolico L."/>
            <person name="Weissenbach J."/>
            <person name="Saurin W."/>
            <person name="Quetier F."/>
            <person name="Schaefer M."/>
            <person name="Mueller-Auer S."/>
            <person name="Gabel C."/>
            <person name="Fuchs M."/>
            <person name="Benes V."/>
            <person name="Wurmbach E."/>
            <person name="Drzonek H."/>
            <person name="Erfle H."/>
            <person name="Jordan N."/>
            <person name="Bangert S."/>
            <person name="Wiedelmann R."/>
            <person name="Kranz H."/>
            <person name="Voss H."/>
            <person name="Holland R."/>
            <person name="Brandt P."/>
            <person name="Nyakatura G."/>
            <person name="Vezzi A."/>
            <person name="D'Angelo M."/>
            <person name="Pallavicini A."/>
            <person name="Toppo S."/>
            <person name="Simionati B."/>
            <person name="Conrad A."/>
            <person name="Hornischer K."/>
            <person name="Kauer G."/>
            <person name="Loehnert T.-H."/>
            <person name="Nordsiek G."/>
            <person name="Reichelt J."/>
            <person name="Scharfe M."/>
            <person name="Schoen O."/>
            <person name="Bargues M."/>
            <person name="Terol J."/>
            <person name="Climent J."/>
            <person name="Navarro P."/>
            <person name="Collado C."/>
            <person name="Perez-Perez A."/>
            <person name="Ottenwaelder B."/>
            <person name="Duchemin D."/>
            <person name="Cooke R."/>
            <person name="Laudie M."/>
            <person name="Berger-Llauro C."/>
            <person name="Purnelle B."/>
            <person name="Masuy D."/>
            <person name="de Haan M."/>
            <person name="Maarse A.C."/>
            <person name="Alcaraz J.-P."/>
            <person name="Cottet A."/>
            <person name="Casacuberta E."/>
            <person name="Monfort A."/>
            <person name="Argiriou A."/>
            <person name="Flores M."/>
            <person name="Liguori R."/>
            <person name="Vitale D."/>
            <person name="Mannhaupt G."/>
            <person name="Haase D."/>
            <person name="Schoof H."/>
            <person name="Rudd S."/>
            <person name="Zaccaria P."/>
            <person name="Mewes H.-W."/>
            <person name="Mayer K.F.X."/>
            <person name="Kaul S."/>
            <person name="Town C.D."/>
            <person name="Koo H.L."/>
            <person name="Tallon L.J."/>
            <person name="Jenkins J."/>
            <person name="Rooney T."/>
            <person name="Rizzo M."/>
            <person name="Walts A."/>
            <person name="Utterback T."/>
            <person name="Fujii C.Y."/>
            <person name="Shea T.P."/>
            <person name="Creasy T.H."/>
            <person name="Haas B."/>
            <person name="Maiti R."/>
            <person name="Wu D."/>
            <person name="Peterson J."/>
            <person name="Van Aken S."/>
            <person name="Pai G."/>
            <person name="Militscher J."/>
            <person name="Sellers P."/>
            <person name="Gill J.E."/>
            <person name="Feldblyum T.V."/>
            <person name="Preuss D."/>
            <person name="Lin X."/>
            <person name="Nierman W.C."/>
            <person name="Salzberg S.L."/>
            <person name="White O."/>
            <person name="Venter J.C."/>
            <person name="Fraser C.M."/>
            <person name="Kaneko T."/>
            <person name="Nakamura Y."/>
            <person name="Sato S."/>
            <person name="Kato T."/>
            <person name="Asamizu E."/>
            <person name="Sasamoto S."/>
            <person name="Kimura T."/>
            <person name="Idesawa K."/>
            <person name="Kawashima K."/>
            <person name="Kishida Y."/>
            <person name="Kiyokawa C."/>
            <person name="Kohara M."/>
            <person name="Matsumoto M."/>
            <person name="Matsuno A."/>
            <person name="Muraki A."/>
            <person name="Nakayama S."/>
            <person name="Nakazaki N."/>
            <person name="Shinpo S."/>
            <person name="Takeuchi C."/>
            <person name="Wada T."/>
            <person name="Watanabe A."/>
            <person name="Yamada M."/>
            <person name="Yasuda M."/>
            <person name="Tabata S."/>
        </authorList>
    </citation>
    <scope>NUCLEOTIDE SEQUENCE [LARGE SCALE GENOMIC DNA]</scope>
    <source>
        <strain>cv. Columbia</strain>
    </source>
</reference>
<reference key="2">
    <citation type="journal article" date="2017" name="Plant J.">
        <title>Araport11: a complete reannotation of the Arabidopsis thaliana reference genome.</title>
        <authorList>
            <person name="Cheng C.Y."/>
            <person name="Krishnakumar V."/>
            <person name="Chan A.P."/>
            <person name="Thibaud-Nissen F."/>
            <person name="Schobel S."/>
            <person name="Town C.D."/>
        </authorList>
    </citation>
    <scope>GENOME REANNOTATION</scope>
    <source>
        <strain>cv. Columbia</strain>
    </source>
</reference>
<reference key="3">
    <citation type="submission" date="2006-07" db="EMBL/GenBank/DDBJ databases">
        <title>Large-scale analysis of RIKEN Arabidopsis full-length (RAFL) cDNAs.</title>
        <authorList>
            <person name="Totoki Y."/>
            <person name="Seki M."/>
            <person name="Ishida J."/>
            <person name="Nakajima M."/>
            <person name="Enju A."/>
            <person name="Kamiya A."/>
            <person name="Narusaka M."/>
            <person name="Shin-i T."/>
            <person name="Nakagawa M."/>
            <person name="Sakamoto N."/>
            <person name="Oishi K."/>
            <person name="Kohara Y."/>
            <person name="Kobayashi M."/>
            <person name="Toyoda A."/>
            <person name="Sakaki Y."/>
            <person name="Sakurai T."/>
            <person name="Iida K."/>
            <person name="Akiyama K."/>
            <person name="Satou M."/>
            <person name="Toyoda T."/>
            <person name="Konagaya A."/>
            <person name="Carninci P."/>
            <person name="Kawai J."/>
            <person name="Hayashizaki Y."/>
            <person name="Shinozaki K."/>
        </authorList>
    </citation>
    <scope>NUCLEOTIDE SEQUENCE [LARGE SCALE MRNA]</scope>
    <source>
        <strain>cv. Columbia</strain>
    </source>
</reference>
<reference key="4">
    <citation type="submission" date="2002-03" db="EMBL/GenBank/DDBJ databases">
        <title>Full-length cDNA from Arabidopsis thaliana.</title>
        <authorList>
            <person name="Brover V.V."/>
            <person name="Troukhan M.E."/>
            <person name="Alexandrov N.A."/>
            <person name="Lu Y.-P."/>
            <person name="Flavell R.B."/>
            <person name="Feldmann K.A."/>
        </authorList>
    </citation>
    <scope>NUCLEOTIDE SEQUENCE [LARGE SCALE MRNA]</scope>
</reference>
<reference key="5">
    <citation type="journal article" date="2004" name="Cell. Mol. Life Sci.">
        <title>Molecular characterization of Arabidopsis PHO80-like proteins, a novel class of CDKA;1-interacting cyclins.</title>
        <authorList>
            <person name="Torres Acosta J.A."/>
            <person name="de Almeida Engler J."/>
            <person name="Raes J."/>
            <person name="Magyar Z."/>
            <person name="de Groodt R."/>
            <person name="Inze D."/>
            <person name="de Veylder L."/>
        </authorList>
    </citation>
    <scope>TISSUE SPECIFICITY</scope>
    <scope>INTERACTION WITH CDKA-1 AND CDKB1-1</scope>
</reference>
<reference key="6">
    <citation type="journal article" date="2004" name="Plant Physiol.">
        <title>Genome-wide analysis of the cyclin family in Arabidopsis and comparative phylogenetic analysis of plant cyclin-like proteins.</title>
        <authorList>
            <person name="Wang G."/>
            <person name="Kong H."/>
            <person name="Sun Y."/>
            <person name="Zhang X."/>
            <person name="Zhang W."/>
            <person name="Altman N."/>
            <person name="dePamphilis C.W."/>
            <person name="Ma H."/>
        </authorList>
    </citation>
    <scope>GENE FAMILY</scope>
    <scope>NOMENCLATURE</scope>
</reference>
<protein>
    <recommendedName>
        <fullName>Cyclin-U3-1</fullName>
        <shortName>CycU3;1</shortName>
    </recommendedName>
    <alternativeName>
        <fullName>Cyclin-P1.1</fullName>
        <shortName>CycP1;1</shortName>
    </alternativeName>
</protein>
<proteinExistence type="evidence at protein level"/>
<keyword id="KW-0131">Cell cycle</keyword>
<keyword id="KW-0132">Cell division</keyword>
<keyword id="KW-0195">Cyclin</keyword>
<keyword id="KW-1185">Reference proteome</keyword>